<sequence>MVNEQIIDISGPLKGEIEVPGDKSMTHRAIMLASLAEGVSTIYKPLLGEDCRRTMDIFRLLGVEIKEDDEKLVVTSPGYQSFNTPHQVLYTGNSGTTTRLLAGLLSGLGIESVLSGDVSIGKRPMDRVLRPLKLMDANIEGIEDNYTPLIIKPSVIKGINYQMEVASAQVKSAILFASLFSKEPTIIKELDVSRNHTETMFKHFNIPIEAEGLSINTTPEAIRYIKPADFHVPGDISSAAFFIVAALITPGSDVTIHNVGINPTRSGIIDIVEKMGGNIQLFNQTTGAEPTASIRIQYTPMLQPITIEGELVPKAIDELPVIALLCTQAVGTSTIKDAEELKVKETNRIDTTADMLNLLGFELQPTNDGLIIHPSEFKTNATVDSLTDHRIGMMLAVASLLSSEPVKIKQFDAVNVSFPGFLPKLKLLENEG</sequence>
<reference key="1">
    <citation type="journal article" date="2008" name="J. Bacteriol.">
        <title>Genome sequence of Staphylococcus aureus strain Newman and comparative analysis of staphylococcal genomes: polymorphism and evolution of two major pathogenicity islands.</title>
        <authorList>
            <person name="Baba T."/>
            <person name="Bae T."/>
            <person name="Schneewind O."/>
            <person name="Takeuchi F."/>
            <person name="Hiramatsu K."/>
        </authorList>
    </citation>
    <scope>NUCLEOTIDE SEQUENCE [LARGE SCALE GENOMIC DNA]</scope>
    <source>
        <strain>Newman</strain>
    </source>
</reference>
<dbReference type="EC" id="2.5.1.19" evidence="1"/>
<dbReference type="EMBL" id="AP009351">
    <property type="protein sequence ID" value="BAF67647.1"/>
    <property type="molecule type" value="Genomic_DNA"/>
</dbReference>
<dbReference type="RefSeq" id="WP_000245895.1">
    <property type="nucleotide sequence ID" value="NZ_JBBIAE010000001.1"/>
</dbReference>
<dbReference type="SMR" id="A6QH15"/>
<dbReference type="KEGG" id="sae:NWMN_1375"/>
<dbReference type="HOGENOM" id="CLU_024321_0_1_9"/>
<dbReference type="UniPathway" id="UPA00053">
    <property type="reaction ID" value="UER00089"/>
</dbReference>
<dbReference type="Proteomes" id="UP000006386">
    <property type="component" value="Chromosome"/>
</dbReference>
<dbReference type="GO" id="GO:0005737">
    <property type="term" value="C:cytoplasm"/>
    <property type="evidence" value="ECO:0007669"/>
    <property type="project" value="UniProtKB-SubCell"/>
</dbReference>
<dbReference type="GO" id="GO:0003866">
    <property type="term" value="F:3-phosphoshikimate 1-carboxyvinyltransferase activity"/>
    <property type="evidence" value="ECO:0007669"/>
    <property type="project" value="UniProtKB-UniRule"/>
</dbReference>
<dbReference type="GO" id="GO:0008652">
    <property type="term" value="P:amino acid biosynthetic process"/>
    <property type="evidence" value="ECO:0007669"/>
    <property type="project" value="UniProtKB-KW"/>
</dbReference>
<dbReference type="GO" id="GO:0009073">
    <property type="term" value="P:aromatic amino acid family biosynthetic process"/>
    <property type="evidence" value="ECO:0007669"/>
    <property type="project" value="UniProtKB-KW"/>
</dbReference>
<dbReference type="GO" id="GO:0009423">
    <property type="term" value="P:chorismate biosynthetic process"/>
    <property type="evidence" value="ECO:0007669"/>
    <property type="project" value="UniProtKB-UniRule"/>
</dbReference>
<dbReference type="CDD" id="cd01556">
    <property type="entry name" value="EPSP_synthase"/>
    <property type="match status" value="1"/>
</dbReference>
<dbReference type="FunFam" id="3.65.10.10:FF:000005">
    <property type="entry name" value="3-phosphoshikimate 1-carboxyvinyltransferase"/>
    <property type="match status" value="1"/>
</dbReference>
<dbReference type="FunFam" id="3.65.10.10:FF:000006">
    <property type="entry name" value="3-phosphoshikimate 1-carboxyvinyltransferase"/>
    <property type="match status" value="1"/>
</dbReference>
<dbReference type="Gene3D" id="3.65.10.10">
    <property type="entry name" value="Enolpyruvate transferase domain"/>
    <property type="match status" value="2"/>
</dbReference>
<dbReference type="HAMAP" id="MF_00210">
    <property type="entry name" value="EPSP_synth"/>
    <property type="match status" value="1"/>
</dbReference>
<dbReference type="InterPro" id="IPR001986">
    <property type="entry name" value="Enolpyruvate_Tfrase_dom"/>
</dbReference>
<dbReference type="InterPro" id="IPR036968">
    <property type="entry name" value="Enolpyruvate_Tfrase_sf"/>
</dbReference>
<dbReference type="InterPro" id="IPR006264">
    <property type="entry name" value="EPSP_synthase"/>
</dbReference>
<dbReference type="InterPro" id="IPR023193">
    <property type="entry name" value="EPSP_synthase_CS"/>
</dbReference>
<dbReference type="InterPro" id="IPR013792">
    <property type="entry name" value="RNA3'P_cycl/enolpyr_Trfase_a/b"/>
</dbReference>
<dbReference type="NCBIfam" id="TIGR01356">
    <property type="entry name" value="aroA"/>
    <property type="match status" value="1"/>
</dbReference>
<dbReference type="PANTHER" id="PTHR21090">
    <property type="entry name" value="AROM/DEHYDROQUINATE SYNTHASE"/>
    <property type="match status" value="1"/>
</dbReference>
<dbReference type="PANTHER" id="PTHR21090:SF5">
    <property type="entry name" value="PENTAFUNCTIONAL AROM POLYPEPTIDE"/>
    <property type="match status" value="1"/>
</dbReference>
<dbReference type="Pfam" id="PF00275">
    <property type="entry name" value="EPSP_synthase"/>
    <property type="match status" value="1"/>
</dbReference>
<dbReference type="PIRSF" id="PIRSF000505">
    <property type="entry name" value="EPSPS"/>
    <property type="match status" value="1"/>
</dbReference>
<dbReference type="SUPFAM" id="SSF55205">
    <property type="entry name" value="EPT/RTPC-like"/>
    <property type="match status" value="1"/>
</dbReference>
<dbReference type="PROSITE" id="PS00104">
    <property type="entry name" value="EPSP_SYNTHASE_1"/>
    <property type="match status" value="1"/>
</dbReference>
<dbReference type="PROSITE" id="PS00885">
    <property type="entry name" value="EPSP_SYNTHASE_2"/>
    <property type="match status" value="1"/>
</dbReference>
<comment type="function">
    <text evidence="1">Catalyzes the transfer of the enolpyruvyl moiety of phosphoenolpyruvate (PEP) to the 5-hydroxyl of shikimate-3-phosphate (S3P) to produce enolpyruvyl shikimate-3-phosphate and inorganic phosphate.</text>
</comment>
<comment type="catalytic activity">
    <reaction evidence="1">
        <text>3-phosphoshikimate + phosphoenolpyruvate = 5-O-(1-carboxyvinyl)-3-phosphoshikimate + phosphate</text>
        <dbReference type="Rhea" id="RHEA:21256"/>
        <dbReference type="ChEBI" id="CHEBI:43474"/>
        <dbReference type="ChEBI" id="CHEBI:57701"/>
        <dbReference type="ChEBI" id="CHEBI:58702"/>
        <dbReference type="ChEBI" id="CHEBI:145989"/>
        <dbReference type="EC" id="2.5.1.19"/>
    </reaction>
    <physiologicalReaction direction="left-to-right" evidence="1">
        <dbReference type="Rhea" id="RHEA:21257"/>
    </physiologicalReaction>
</comment>
<comment type="pathway">
    <text evidence="1">Metabolic intermediate biosynthesis; chorismate biosynthesis; chorismate from D-erythrose 4-phosphate and phosphoenolpyruvate: step 6/7.</text>
</comment>
<comment type="subunit">
    <text evidence="1">Monomer.</text>
</comment>
<comment type="subcellular location">
    <subcellularLocation>
        <location evidence="1">Cytoplasm</location>
    </subcellularLocation>
</comment>
<comment type="similarity">
    <text evidence="1">Belongs to the EPSP synthase family.</text>
</comment>
<keyword id="KW-0028">Amino-acid biosynthesis</keyword>
<keyword id="KW-0057">Aromatic amino acid biosynthesis</keyword>
<keyword id="KW-0963">Cytoplasm</keyword>
<keyword id="KW-0808">Transferase</keyword>
<protein>
    <recommendedName>
        <fullName evidence="1">3-phosphoshikimate 1-carboxyvinyltransferase</fullName>
        <ecNumber evidence="1">2.5.1.19</ecNumber>
    </recommendedName>
    <alternativeName>
        <fullName evidence="1">5-enolpyruvylshikimate-3-phosphate synthase</fullName>
        <shortName evidence="1">EPSP synthase</shortName>
        <shortName evidence="1">EPSPS</shortName>
    </alternativeName>
</protein>
<name>AROA_STAAE</name>
<organism>
    <name type="scientific">Staphylococcus aureus (strain Newman)</name>
    <dbReference type="NCBI Taxonomy" id="426430"/>
    <lineage>
        <taxon>Bacteria</taxon>
        <taxon>Bacillati</taxon>
        <taxon>Bacillota</taxon>
        <taxon>Bacilli</taxon>
        <taxon>Bacillales</taxon>
        <taxon>Staphylococcaceae</taxon>
        <taxon>Staphylococcus</taxon>
    </lineage>
</organism>
<gene>
    <name evidence="1" type="primary">aroA</name>
    <name type="ordered locus">NWMN_1375</name>
</gene>
<proteinExistence type="inferred from homology"/>
<accession>A6QH15</accession>
<evidence type="ECO:0000255" key="1">
    <source>
        <dbReference type="HAMAP-Rule" id="MF_00210"/>
    </source>
</evidence>
<feature type="chain" id="PRO_1000071739" description="3-phosphoshikimate 1-carboxyvinyltransferase">
    <location>
        <begin position="1"/>
        <end position="432"/>
    </location>
</feature>
<feature type="active site" description="Proton acceptor" evidence="1">
    <location>
        <position position="317"/>
    </location>
</feature>
<feature type="binding site" evidence="1">
    <location>
        <position position="23"/>
    </location>
    <ligand>
        <name>3-phosphoshikimate</name>
        <dbReference type="ChEBI" id="CHEBI:145989"/>
    </ligand>
</feature>
<feature type="binding site" evidence="1">
    <location>
        <position position="23"/>
    </location>
    <ligand>
        <name>phosphoenolpyruvate</name>
        <dbReference type="ChEBI" id="CHEBI:58702"/>
    </ligand>
</feature>
<feature type="binding site" evidence="1">
    <location>
        <position position="24"/>
    </location>
    <ligand>
        <name>3-phosphoshikimate</name>
        <dbReference type="ChEBI" id="CHEBI:145989"/>
    </ligand>
</feature>
<feature type="binding site" evidence="1">
    <location>
        <position position="28"/>
    </location>
    <ligand>
        <name>3-phosphoshikimate</name>
        <dbReference type="ChEBI" id="CHEBI:145989"/>
    </ligand>
</feature>
<feature type="binding site" evidence="1">
    <location>
        <position position="95"/>
    </location>
    <ligand>
        <name>phosphoenolpyruvate</name>
        <dbReference type="ChEBI" id="CHEBI:58702"/>
    </ligand>
</feature>
<feature type="binding site" evidence="1">
    <location>
        <position position="123"/>
    </location>
    <ligand>
        <name>phosphoenolpyruvate</name>
        <dbReference type="ChEBI" id="CHEBI:58702"/>
    </ligand>
</feature>
<feature type="binding site" evidence="1">
    <location>
        <position position="167"/>
    </location>
    <ligand>
        <name>3-phosphoshikimate</name>
        <dbReference type="ChEBI" id="CHEBI:145989"/>
    </ligand>
</feature>
<feature type="binding site" evidence="1">
    <location>
        <position position="169"/>
    </location>
    <ligand>
        <name>3-phosphoshikimate</name>
        <dbReference type="ChEBI" id="CHEBI:145989"/>
    </ligand>
</feature>
<feature type="binding site" evidence="1">
    <location>
        <position position="169"/>
    </location>
    <ligand>
        <name>phosphoenolpyruvate</name>
        <dbReference type="ChEBI" id="CHEBI:58702"/>
    </ligand>
</feature>
<feature type="binding site" evidence="1">
    <location>
        <position position="317"/>
    </location>
    <ligand>
        <name>3-phosphoshikimate</name>
        <dbReference type="ChEBI" id="CHEBI:145989"/>
    </ligand>
</feature>
<feature type="binding site" evidence="1">
    <location>
        <position position="344"/>
    </location>
    <ligand>
        <name>3-phosphoshikimate</name>
        <dbReference type="ChEBI" id="CHEBI:145989"/>
    </ligand>
</feature>
<feature type="binding site" evidence="1">
    <location>
        <position position="348"/>
    </location>
    <ligand>
        <name>phosphoenolpyruvate</name>
        <dbReference type="ChEBI" id="CHEBI:58702"/>
    </ligand>
</feature>
<feature type="binding site" evidence="1">
    <location>
        <position position="390"/>
    </location>
    <ligand>
        <name>phosphoenolpyruvate</name>
        <dbReference type="ChEBI" id="CHEBI:58702"/>
    </ligand>
</feature>